<accession>B8DN64</accession>
<organism>
    <name type="scientific">Nitratidesulfovibrio vulgaris (strain DSM 19637 / Miyazaki F)</name>
    <name type="common">Desulfovibrio vulgaris</name>
    <dbReference type="NCBI Taxonomy" id="883"/>
    <lineage>
        <taxon>Bacteria</taxon>
        <taxon>Pseudomonadati</taxon>
        <taxon>Thermodesulfobacteriota</taxon>
        <taxon>Desulfovibrionia</taxon>
        <taxon>Desulfovibrionales</taxon>
        <taxon>Desulfovibrionaceae</taxon>
        <taxon>Nitratidesulfovibrio</taxon>
    </lineage>
</organism>
<name>ASSY_NITV9</name>
<sequence length="401" mass="44292">MAKAIKKVVLAYSGGLDTSVILKWIAVTYGCEVVTLTADLGQEEDLDGVDAKALRTGASRAYVEDLREEFARDFIFPMMRSGAVYEGRYLLGTSIARPLIAKRLVDIARAEGAQAVAHGATGKGNDQVRFELAVNALAPDLDVIAPWRIWDLRSRTDLTAFAEQHGIPLSTSSKQYSMDRNMLHCSFEGGELEDPWCEPGPNSHVMAVPVEQAPDTPEYITIEFKKGDAVAVNGEAMSPASIIRTLNTIGGRHGIGRLDMVENRFVGIKSRGVYETPGGTVLHIAHRDLEGICMDRESMHLRDQLIPRYSEAVYNGFWFAPEREAMQAFIDKTQETVNGTVRLKLYKGNAYPVGRTSPNTLYCHDLATFEDCATYDHADAAGFIKLQGLRVRGYAQRVKKD</sequence>
<proteinExistence type="inferred from homology"/>
<feature type="chain" id="PRO_1000116191" description="Argininosuccinate synthase">
    <location>
        <begin position="1"/>
        <end position="401"/>
    </location>
</feature>
<feature type="binding site" evidence="1">
    <location>
        <begin position="11"/>
        <end position="19"/>
    </location>
    <ligand>
        <name>ATP</name>
        <dbReference type="ChEBI" id="CHEBI:30616"/>
    </ligand>
</feature>
<feature type="binding site" evidence="1">
    <location>
        <position position="38"/>
    </location>
    <ligand>
        <name>ATP</name>
        <dbReference type="ChEBI" id="CHEBI:30616"/>
    </ligand>
</feature>
<feature type="binding site" evidence="1">
    <location>
        <position position="89"/>
    </location>
    <ligand>
        <name>L-citrulline</name>
        <dbReference type="ChEBI" id="CHEBI:57743"/>
    </ligand>
</feature>
<feature type="binding site" evidence="1">
    <location>
        <position position="94"/>
    </location>
    <ligand>
        <name>L-citrulline</name>
        <dbReference type="ChEBI" id="CHEBI:57743"/>
    </ligand>
</feature>
<feature type="binding site" evidence="1">
    <location>
        <position position="119"/>
    </location>
    <ligand>
        <name>ATP</name>
        <dbReference type="ChEBI" id="CHEBI:30616"/>
    </ligand>
</feature>
<feature type="binding site" evidence="1">
    <location>
        <position position="121"/>
    </location>
    <ligand>
        <name>L-aspartate</name>
        <dbReference type="ChEBI" id="CHEBI:29991"/>
    </ligand>
</feature>
<feature type="binding site" evidence="1">
    <location>
        <position position="125"/>
    </location>
    <ligand>
        <name>L-aspartate</name>
        <dbReference type="ChEBI" id="CHEBI:29991"/>
    </ligand>
</feature>
<feature type="binding site" evidence="1">
    <location>
        <position position="125"/>
    </location>
    <ligand>
        <name>L-citrulline</name>
        <dbReference type="ChEBI" id="CHEBI:57743"/>
    </ligand>
</feature>
<feature type="binding site" evidence="1">
    <location>
        <position position="126"/>
    </location>
    <ligand>
        <name>L-aspartate</name>
        <dbReference type="ChEBI" id="CHEBI:29991"/>
    </ligand>
</feature>
<feature type="binding site" evidence="1">
    <location>
        <position position="129"/>
    </location>
    <ligand>
        <name>L-citrulline</name>
        <dbReference type="ChEBI" id="CHEBI:57743"/>
    </ligand>
</feature>
<feature type="binding site" evidence="1">
    <location>
        <position position="177"/>
    </location>
    <ligand>
        <name>L-citrulline</name>
        <dbReference type="ChEBI" id="CHEBI:57743"/>
    </ligand>
</feature>
<feature type="binding site" evidence="1">
    <location>
        <position position="186"/>
    </location>
    <ligand>
        <name>L-citrulline</name>
        <dbReference type="ChEBI" id="CHEBI:57743"/>
    </ligand>
</feature>
<feature type="binding site" evidence="1">
    <location>
        <position position="262"/>
    </location>
    <ligand>
        <name>L-citrulline</name>
        <dbReference type="ChEBI" id="CHEBI:57743"/>
    </ligand>
</feature>
<feature type="binding site" evidence="1">
    <location>
        <position position="274"/>
    </location>
    <ligand>
        <name>L-citrulline</name>
        <dbReference type="ChEBI" id="CHEBI:57743"/>
    </ligand>
</feature>
<reference key="1">
    <citation type="submission" date="2008-10" db="EMBL/GenBank/DDBJ databases">
        <title>Complete sequence of Desulfovibrio vulgaris str. 'Miyazaki F'.</title>
        <authorList>
            <person name="Lucas S."/>
            <person name="Copeland A."/>
            <person name="Lapidus A."/>
            <person name="Glavina del Rio T."/>
            <person name="Dalin E."/>
            <person name="Tice H."/>
            <person name="Bruce D."/>
            <person name="Goodwin L."/>
            <person name="Pitluck S."/>
            <person name="Sims D."/>
            <person name="Brettin T."/>
            <person name="Detter J.C."/>
            <person name="Han C."/>
            <person name="Larimer F."/>
            <person name="Land M."/>
            <person name="Hauser L."/>
            <person name="Kyrpides N."/>
            <person name="Mikhailova N."/>
            <person name="Hazen T.C."/>
            <person name="Richardson P."/>
        </authorList>
    </citation>
    <scope>NUCLEOTIDE SEQUENCE [LARGE SCALE GENOMIC DNA]</scope>
    <source>
        <strain>DSM 19637 / Miyazaki F</strain>
    </source>
</reference>
<gene>
    <name evidence="1" type="primary">argG</name>
    <name type="ordered locus">DvMF_0047</name>
</gene>
<dbReference type="EC" id="6.3.4.5" evidence="1"/>
<dbReference type="EMBL" id="CP001197">
    <property type="protein sequence ID" value="ACL07008.1"/>
    <property type="molecule type" value="Genomic_DNA"/>
</dbReference>
<dbReference type="SMR" id="B8DN64"/>
<dbReference type="STRING" id="883.DvMF_0047"/>
<dbReference type="KEGG" id="dvm:DvMF_0047"/>
<dbReference type="eggNOG" id="COG0137">
    <property type="taxonomic scope" value="Bacteria"/>
</dbReference>
<dbReference type="HOGENOM" id="CLU_032784_4_2_7"/>
<dbReference type="OrthoDB" id="9801641at2"/>
<dbReference type="UniPathway" id="UPA00068">
    <property type="reaction ID" value="UER00113"/>
</dbReference>
<dbReference type="GO" id="GO:0005737">
    <property type="term" value="C:cytoplasm"/>
    <property type="evidence" value="ECO:0007669"/>
    <property type="project" value="UniProtKB-SubCell"/>
</dbReference>
<dbReference type="GO" id="GO:0004055">
    <property type="term" value="F:argininosuccinate synthase activity"/>
    <property type="evidence" value="ECO:0007669"/>
    <property type="project" value="UniProtKB-UniRule"/>
</dbReference>
<dbReference type="GO" id="GO:0005524">
    <property type="term" value="F:ATP binding"/>
    <property type="evidence" value="ECO:0007669"/>
    <property type="project" value="UniProtKB-UniRule"/>
</dbReference>
<dbReference type="GO" id="GO:0000053">
    <property type="term" value="P:argininosuccinate metabolic process"/>
    <property type="evidence" value="ECO:0007669"/>
    <property type="project" value="TreeGrafter"/>
</dbReference>
<dbReference type="GO" id="GO:0006526">
    <property type="term" value="P:L-arginine biosynthetic process"/>
    <property type="evidence" value="ECO:0007669"/>
    <property type="project" value="UniProtKB-UniRule"/>
</dbReference>
<dbReference type="GO" id="GO:0000050">
    <property type="term" value="P:urea cycle"/>
    <property type="evidence" value="ECO:0007669"/>
    <property type="project" value="TreeGrafter"/>
</dbReference>
<dbReference type="CDD" id="cd01999">
    <property type="entry name" value="ASS"/>
    <property type="match status" value="1"/>
</dbReference>
<dbReference type="FunFam" id="3.40.50.620:FF:000019">
    <property type="entry name" value="Argininosuccinate synthase"/>
    <property type="match status" value="1"/>
</dbReference>
<dbReference type="FunFam" id="3.90.1260.10:FF:000007">
    <property type="entry name" value="Argininosuccinate synthase"/>
    <property type="match status" value="1"/>
</dbReference>
<dbReference type="Gene3D" id="3.90.1260.10">
    <property type="entry name" value="Argininosuccinate synthetase, chain A, domain 2"/>
    <property type="match status" value="1"/>
</dbReference>
<dbReference type="Gene3D" id="3.40.50.620">
    <property type="entry name" value="HUPs"/>
    <property type="match status" value="1"/>
</dbReference>
<dbReference type="Gene3D" id="1.20.5.470">
    <property type="entry name" value="Single helix bin"/>
    <property type="match status" value="1"/>
</dbReference>
<dbReference type="HAMAP" id="MF_00005">
    <property type="entry name" value="Arg_succ_synth_type1"/>
    <property type="match status" value="1"/>
</dbReference>
<dbReference type="InterPro" id="IPR048268">
    <property type="entry name" value="Arginosuc_syn_C"/>
</dbReference>
<dbReference type="InterPro" id="IPR048267">
    <property type="entry name" value="Arginosuc_syn_N"/>
</dbReference>
<dbReference type="InterPro" id="IPR001518">
    <property type="entry name" value="Arginosuc_synth"/>
</dbReference>
<dbReference type="InterPro" id="IPR018223">
    <property type="entry name" value="Arginosuc_synth_CS"/>
</dbReference>
<dbReference type="InterPro" id="IPR023434">
    <property type="entry name" value="Arginosuc_synth_type_1_subfam"/>
</dbReference>
<dbReference type="InterPro" id="IPR024074">
    <property type="entry name" value="AS_cat/multimer_dom_body"/>
</dbReference>
<dbReference type="InterPro" id="IPR014729">
    <property type="entry name" value="Rossmann-like_a/b/a_fold"/>
</dbReference>
<dbReference type="NCBIfam" id="TIGR00032">
    <property type="entry name" value="argG"/>
    <property type="match status" value="1"/>
</dbReference>
<dbReference type="NCBIfam" id="NF001770">
    <property type="entry name" value="PRK00509.1"/>
    <property type="match status" value="1"/>
</dbReference>
<dbReference type="PANTHER" id="PTHR11587">
    <property type="entry name" value="ARGININOSUCCINATE SYNTHASE"/>
    <property type="match status" value="1"/>
</dbReference>
<dbReference type="PANTHER" id="PTHR11587:SF2">
    <property type="entry name" value="ARGININOSUCCINATE SYNTHASE"/>
    <property type="match status" value="1"/>
</dbReference>
<dbReference type="Pfam" id="PF20979">
    <property type="entry name" value="Arginosuc_syn_C"/>
    <property type="match status" value="1"/>
</dbReference>
<dbReference type="Pfam" id="PF00764">
    <property type="entry name" value="Arginosuc_synth"/>
    <property type="match status" value="1"/>
</dbReference>
<dbReference type="SUPFAM" id="SSF52402">
    <property type="entry name" value="Adenine nucleotide alpha hydrolases-like"/>
    <property type="match status" value="1"/>
</dbReference>
<dbReference type="SUPFAM" id="SSF69864">
    <property type="entry name" value="Argininosuccinate synthetase, C-terminal domain"/>
    <property type="match status" value="1"/>
</dbReference>
<dbReference type="PROSITE" id="PS00564">
    <property type="entry name" value="ARGININOSUCCIN_SYN_1"/>
    <property type="match status" value="1"/>
</dbReference>
<dbReference type="PROSITE" id="PS00565">
    <property type="entry name" value="ARGININOSUCCIN_SYN_2"/>
    <property type="match status" value="1"/>
</dbReference>
<evidence type="ECO:0000255" key="1">
    <source>
        <dbReference type="HAMAP-Rule" id="MF_00005"/>
    </source>
</evidence>
<comment type="catalytic activity">
    <reaction evidence="1">
        <text>L-citrulline + L-aspartate + ATP = 2-(N(omega)-L-arginino)succinate + AMP + diphosphate + H(+)</text>
        <dbReference type="Rhea" id="RHEA:10932"/>
        <dbReference type="ChEBI" id="CHEBI:15378"/>
        <dbReference type="ChEBI" id="CHEBI:29991"/>
        <dbReference type="ChEBI" id="CHEBI:30616"/>
        <dbReference type="ChEBI" id="CHEBI:33019"/>
        <dbReference type="ChEBI" id="CHEBI:57472"/>
        <dbReference type="ChEBI" id="CHEBI:57743"/>
        <dbReference type="ChEBI" id="CHEBI:456215"/>
        <dbReference type="EC" id="6.3.4.5"/>
    </reaction>
</comment>
<comment type="pathway">
    <text evidence="1">Amino-acid biosynthesis; L-arginine biosynthesis; L-arginine from L-ornithine and carbamoyl phosphate: step 2/3.</text>
</comment>
<comment type="subunit">
    <text evidence="1">Homotetramer.</text>
</comment>
<comment type="subcellular location">
    <subcellularLocation>
        <location evidence="1">Cytoplasm</location>
    </subcellularLocation>
</comment>
<comment type="similarity">
    <text evidence="1">Belongs to the argininosuccinate synthase family. Type 1 subfamily.</text>
</comment>
<protein>
    <recommendedName>
        <fullName evidence="1">Argininosuccinate synthase</fullName>
        <ecNumber evidence="1">6.3.4.5</ecNumber>
    </recommendedName>
    <alternativeName>
        <fullName evidence="1">Citrulline--aspartate ligase</fullName>
    </alternativeName>
</protein>
<keyword id="KW-0028">Amino-acid biosynthesis</keyword>
<keyword id="KW-0055">Arginine biosynthesis</keyword>
<keyword id="KW-0067">ATP-binding</keyword>
<keyword id="KW-0963">Cytoplasm</keyword>
<keyword id="KW-0436">Ligase</keyword>
<keyword id="KW-0547">Nucleotide-binding</keyword>